<sequence length="621" mass="67478">MSVDISNFPNLALADTPVELRSLPFERLPVLCNELREYLLRSVSRSSGHLASGLGTVELTVALHYVYNTPFDRLVWDVGHQAYPHKILTGRRDRMQSIRQKDGLHPFPWRGESEYDVLSVGHSSTSIGAALGMAVAAESEGLGRKVVAVIGDGAITAGMAFEALNHAGDVHKDMLVVLNDNEMSISENVGALNNHLARIMSGKLYTTIREGGKKVLAGLPPVKELAKRAEEHLKGMVVPGTLFEEFGFNYIGPIDGHDINALVETLRNMRNLKGPQLLHVKTKKGKGYEPAEKDPIGYHGVPKFNPDECTLPKASGGKPSFSAIFGQWLCDMAAKDERLVGITPAMREGSGLVKFSQQYPDRYFDVAIAEQHAVTFAAGLAIADQKPVVAIYSSFLQRAYDQLIHDVALQELPVLFAIDRAGLVGADGPTHQGAFDISFLRTVPNMVIMTPSDENECRQMLYTGYQCNGPAAVRYPRGSGTGIQVESEMQALALGKGRIVRQGKGTAILAFGTLLQQAKAAAEALDATLVDMRFVKPMDEALVFSLAATHDQFVTLEDNAIMGGAGSAVNELLMRSKQCKPVLNLGLPDRFVEQGTQEEIYALLGLDGTGIQRSIEQWLQA</sequence>
<reference key="1">
    <citation type="journal article" date="2006" name="J. Bacteriol.">
        <title>Genome sequence of Aeromonas hydrophila ATCC 7966T: jack of all trades.</title>
        <authorList>
            <person name="Seshadri R."/>
            <person name="Joseph S.W."/>
            <person name="Chopra A.K."/>
            <person name="Sha J."/>
            <person name="Shaw J."/>
            <person name="Graf J."/>
            <person name="Haft D.H."/>
            <person name="Wu M."/>
            <person name="Ren Q."/>
            <person name="Rosovitz M.J."/>
            <person name="Madupu R."/>
            <person name="Tallon L."/>
            <person name="Kim M."/>
            <person name="Jin S."/>
            <person name="Vuong H."/>
            <person name="Stine O.C."/>
            <person name="Ali A."/>
            <person name="Horneman A.J."/>
            <person name="Heidelberg J.F."/>
        </authorList>
    </citation>
    <scope>NUCLEOTIDE SEQUENCE [LARGE SCALE GENOMIC DNA]</scope>
    <source>
        <strain>ATCC 7966 / DSM 30187 / BCRC 13018 / CCUG 14551 / JCM 1027 / KCTC 2358 / NCIMB 9240 / NCTC 8049</strain>
    </source>
</reference>
<proteinExistence type="inferred from homology"/>
<organism>
    <name type="scientific">Aeromonas hydrophila subsp. hydrophila (strain ATCC 7966 / DSM 30187 / BCRC 13018 / CCUG 14551 / JCM 1027 / KCTC 2358 / NCIMB 9240 / NCTC 8049)</name>
    <dbReference type="NCBI Taxonomy" id="380703"/>
    <lineage>
        <taxon>Bacteria</taxon>
        <taxon>Pseudomonadati</taxon>
        <taxon>Pseudomonadota</taxon>
        <taxon>Gammaproteobacteria</taxon>
        <taxon>Aeromonadales</taxon>
        <taxon>Aeromonadaceae</taxon>
        <taxon>Aeromonas</taxon>
    </lineage>
</organism>
<comment type="function">
    <text evidence="1">Catalyzes the acyloin condensation reaction between C atoms 2 and 3 of pyruvate and glyceraldehyde 3-phosphate to yield 1-deoxy-D-xylulose-5-phosphate (DXP).</text>
</comment>
<comment type="catalytic activity">
    <reaction evidence="1">
        <text>D-glyceraldehyde 3-phosphate + pyruvate + H(+) = 1-deoxy-D-xylulose 5-phosphate + CO2</text>
        <dbReference type="Rhea" id="RHEA:12605"/>
        <dbReference type="ChEBI" id="CHEBI:15361"/>
        <dbReference type="ChEBI" id="CHEBI:15378"/>
        <dbReference type="ChEBI" id="CHEBI:16526"/>
        <dbReference type="ChEBI" id="CHEBI:57792"/>
        <dbReference type="ChEBI" id="CHEBI:59776"/>
        <dbReference type="EC" id="2.2.1.7"/>
    </reaction>
</comment>
<comment type="cofactor">
    <cofactor evidence="1">
        <name>Mg(2+)</name>
        <dbReference type="ChEBI" id="CHEBI:18420"/>
    </cofactor>
    <text evidence="1">Binds 1 Mg(2+) ion per subunit.</text>
</comment>
<comment type="cofactor">
    <cofactor evidence="1">
        <name>thiamine diphosphate</name>
        <dbReference type="ChEBI" id="CHEBI:58937"/>
    </cofactor>
    <text evidence="1">Binds 1 thiamine pyrophosphate per subunit.</text>
</comment>
<comment type="pathway">
    <text evidence="1">Metabolic intermediate biosynthesis; 1-deoxy-D-xylulose 5-phosphate biosynthesis; 1-deoxy-D-xylulose 5-phosphate from D-glyceraldehyde 3-phosphate and pyruvate: step 1/1.</text>
</comment>
<comment type="subunit">
    <text evidence="1">Homodimer.</text>
</comment>
<comment type="similarity">
    <text evidence="1">Belongs to the transketolase family. DXPS subfamily.</text>
</comment>
<evidence type="ECO:0000255" key="1">
    <source>
        <dbReference type="HAMAP-Rule" id="MF_00315"/>
    </source>
</evidence>
<dbReference type="EC" id="2.2.1.7" evidence="1"/>
<dbReference type="EMBL" id="CP000462">
    <property type="protein sequence ID" value="ABK37292.1"/>
    <property type="molecule type" value="Genomic_DNA"/>
</dbReference>
<dbReference type="RefSeq" id="WP_011707088.1">
    <property type="nucleotide sequence ID" value="NC_008570.1"/>
</dbReference>
<dbReference type="RefSeq" id="YP_857810.1">
    <property type="nucleotide sequence ID" value="NC_008570.1"/>
</dbReference>
<dbReference type="SMR" id="A0KNF9"/>
<dbReference type="STRING" id="380703.AHA_3321"/>
<dbReference type="EnsemblBacteria" id="ABK37292">
    <property type="protein sequence ID" value="ABK37292"/>
    <property type="gene ID" value="AHA_3321"/>
</dbReference>
<dbReference type="GeneID" id="4489901"/>
<dbReference type="KEGG" id="aha:AHA_3321"/>
<dbReference type="PATRIC" id="fig|380703.7.peg.3315"/>
<dbReference type="eggNOG" id="COG1154">
    <property type="taxonomic scope" value="Bacteria"/>
</dbReference>
<dbReference type="HOGENOM" id="CLU_009227_1_4_6"/>
<dbReference type="OrthoDB" id="9803371at2"/>
<dbReference type="UniPathway" id="UPA00064">
    <property type="reaction ID" value="UER00091"/>
</dbReference>
<dbReference type="Proteomes" id="UP000000756">
    <property type="component" value="Chromosome"/>
</dbReference>
<dbReference type="GO" id="GO:0005829">
    <property type="term" value="C:cytosol"/>
    <property type="evidence" value="ECO:0007669"/>
    <property type="project" value="TreeGrafter"/>
</dbReference>
<dbReference type="GO" id="GO:0008661">
    <property type="term" value="F:1-deoxy-D-xylulose-5-phosphate synthase activity"/>
    <property type="evidence" value="ECO:0007669"/>
    <property type="project" value="UniProtKB-UniRule"/>
</dbReference>
<dbReference type="GO" id="GO:0000287">
    <property type="term" value="F:magnesium ion binding"/>
    <property type="evidence" value="ECO:0007669"/>
    <property type="project" value="UniProtKB-UniRule"/>
</dbReference>
<dbReference type="GO" id="GO:0030976">
    <property type="term" value="F:thiamine pyrophosphate binding"/>
    <property type="evidence" value="ECO:0007669"/>
    <property type="project" value="UniProtKB-UniRule"/>
</dbReference>
<dbReference type="GO" id="GO:0052865">
    <property type="term" value="P:1-deoxy-D-xylulose 5-phosphate biosynthetic process"/>
    <property type="evidence" value="ECO:0007669"/>
    <property type="project" value="UniProtKB-UniPathway"/>
</dbReference>
<dbReference type="GO" id="GO:0019288">
    <property type="term" value="P:isopentenyl diphosphate biosynthetic process, methylerythritol 4-phosphate pathway"/>
    <property type="evidence" value="ECO:0007669"/>
    <property type="project" value="TreeGrafter"/>
</dbReference>
<dbReference type="GO" id="GO:0016114">
    <property type="term" value="P:terpenoid biosynthetic process"/>
    <property type="evidence" value="ECO:0007669"/>
    <property type="project" value="UniProtKB-UniRule"/>
</dbReference>
<dbReference type="GO" id="GO:0009228">
    <property type="term" value="P:thiamine biosynthetic process"/>
    <property type="evidence" value="ECO:0007669"/>
    <property type="project" value="UniProtKB-UniRule"/>
</dbReference>
<dbReference type="CDD" id="cd02007">
    <property type="entry name" value="TPP_DXS"/>
    <property type="match status" value="1"/>
</dbReference>
<dbReference type="CDD" id="cd07033">
    <property type="entry name" value="TPP_PYR_DXS_TK_like"/>
    <property type="match status" value="1"/>
</dbReference>
<dbReference type="FunFam" id="3.40.50.920:FF:000002">
    <property type="entry name" value="1-deoxy-D-xylulose-5-phosphate synthase"/>
    <property type="match status" value="1"/>
</dbReference>
<dbReference type="FunFam" id="3.40.50.970:FF:000005">
    <property type="entry name" value="1-deoxy-D-xylulose-5-phosphate synthase"/>
    <property type="match status" value="1"/>
</dbReference>
<dbReference type="Gene3D" id="3.40.50.920">
    <property type="match status" value="1"/>
</dbReference>
<dbReference type="Gene3D" id="3.40.50.970">
    <property type="match status" value="2"/>
</dbReference>
<dbReference type="HAMAP" id="MF_00315">
    <property type="entry name" value="DXP_synth"/>
    <property type="match status" value="1"/>
</dbReference>
<dbReference type="InterPro" id="IPR005477">
    <property type="entry name" value="Dxylulose-5-P_synthase"/>
</dbReference>
<dbReference type="InterPro" id="IPR029061">
    <property type="entry name" value="THDP-binding"/>
</dbReference>
<dbReference type="InterPro" id="IPR009014">
    <property type="entry name" value="Transketo_C/PFOR_II"/>
</dbReference>
<dbReference type="InterPro" id="IPR005475">
    <property type="entry name" value="Transketolase-like_Pyr-bd"/>
</dbReference>
<dbReference type="InterPro" id="IPR020826">
    <property type="entry name" value="Transketolase_BS"/>
</dbReference>
<dbReference type="InterPro" id="IPR033248">
    <property type="entry name" value="Transketolase_C"/>
</dbReference>
<dbReference type="NCBIfam" id="TIGR00204">
    <property type="entry name" value="dxs"/>
    <property type="match status" value="1"/>
</dbReference>
<dbReference type="NCBIfam" id="NF003933">
    <property type="entry name" value="PRK05444.2-2"/>
    <property type="match status" value="1"/>
</dbReference>
<dbReference type="PANTHER" id="PTHR43322">
    <property type="entry name" value="1-D-DEOXYXYLULOSE 5-PHOSPHATE SYNTHASE-RELATED"/>
    <property type="match status" value="1"/>
</dbReference>
<dbReference type="PANTHER" id="PTHR43322:SF5">
    <property type="entry name" value="1-DEOXY-D-XYLULOSE-5-PHOSPHATE SYNTHASE, CHLOROPLASTIC"/>
    <property type="match status" value="1"/>
</dbReference>
<dbReference type="Pfam" id="PF13292">
    <property type="entry name" value="DXP_synthase_N"/>
    <property type="match status" value="1"/>
</dbReference>
<dbReference type="Pfam" id="PF02779">
    <property type="entry name" value="Transket_pyr"/>
    <property type="match status" value="1"/>
</dbReference>
<dbReference type="Pfam" id="PF02780">
    <property type="entry name" value="Transketolase_C"/>
    <property type="match status" value="1"/>
</dbReference>
<dbReference type="SMART" id="SM00861">
    <property type="entry name" value="Transket_pyr"/>
    <property type="match status" value="1"/>
</dbReference>
<dbReference type="SUPFAM" id="SSF52518">
    <property type="entry name" value="Thiamin diphosphate-binding fold (THDP-binding)"/>
    <property type="match status" value="2"/>
</dbReference>
<dbReference type="SUPFAM" id="SSF52922">
    <property type="entry name" value="TK C-terminal domain-like"/>
    <property type="match status" value="1"/>
</dbReference>
<dbReference type="PROSITE" id="PS00802">
    <property type="entry name" value="TRANSKETOLASE_2"/>
    <property type="match status" value="1"/>
</dbReference>
<feature type="chain" id="PRO_1000019001" description="1-deoxy-D-xylulose-5-phosphate synthase">
    <location>
        <begin position="1"/>
        <end position="621"/>
    </location>
</feature>
<feature type="binding site" evidence="1">
    <location>
        <position position="80"/>
    </location>
    <ligand>
        <name>thiamine diphosphate</name>
        <dbReference type="ChEBI" id="CHEBI:58937"/>
    </ligand>
</feature>
<feature type="binding site" evidence="1">
    <location>
        <begin position="121"/>
        <end position="123"/>
    </location>
    <ligand>
        <name>thiamine diphosphate</name>
        <dbReference type="ChEBI" id="CHEBI:58937"/>
    </ligand>
</feature>
<feature type="binding site" evidence="1">
    <location>
        <position position="152"/>
    </location>
    <ligand>
        <name>Mg(2+)</name>
        <dbReference type="ChEBI" id="CHEBI:18420"/>
    </ligand>
</feature>
<feature type="binding site" evidence="1">
    <location>
        <begin position="153"/>
        <end position="154"/>
    </location>
    <ligand>
        <name>thiamine diphosphate</name>
        <dbReference type="ChEBI" id="CHEBI:58937"/>
    </ligand>
</feature>
<feature type="binding site" evidence="1">
    <location>
        <position position="181"/>
    </location>
    <ligand>
        <name>Mg(2+)</name>
        <dbReference type="ChEBI" id="CHEBI:18420"/>
    </ligand>
</feature>
<feature type="binding site" evidence="1">
    <location>
        <position position="181"/>
    </location>
    <ligand>
        <name>thiamine diphosphate</name>
        <dbReference type="ChEBI" id="CHEBI:58937"/>
    </ligand>
</feature>
<feature type="binding site" evidence="1">
    <location>
        <position position="288"/>
    </location>
    <ligand>
        <name>thiamine diphosphate</name>
        <dbReference type="ChEBI" id="CHEBI:58937"/>
    </ligand>
</feature>
<feature type="binding site" evidence="1">
    <location>
        <position position="370"/>
    </location>
    <ligand>
        <name>thiamine diphosphate</name>
        <dbReference type="ChEBI" id="CHEBI:58937"/>
    </ligand>
</feature>
<name>DXS_AERHH</name>
<gene>
    <name evidence="1" type="primary">dxs</name>
    <name type="ordered locus">AHA_3321</name>
</gene>
<keyword id="KW-0414">Isoprene biosynthesis</keyword>
<keyword id="KW-0460">Magnesium</keyword>
<keyword id="KW-0479">Metal-binding</keyword>
<keyword id="KW-1185">Reference proteome</keyword>
<keyword id="KW-0784">Thiamine biosynthesis</keyword>
<keyword id="KW-0786">Thiamine pyrophosphate</keyword>
<keyword id="KW-0808">Transferase</keyword>
<protein>
    <recommendedName>
        <fullName evidence="1">1-deoxy-D-xylulose-5-phosphate synthase</fullName>
        <ecNumber evidence="1">2.2.1.7</ecNumber>
    </recommendedName>
    <alternativeName>
        <fullName evidence="1">1-deoxyxylulose-5-phosphate synthase</fullName>
        <shortName evidence="1">DXP synthase</shortName>
        <shortName evidence="1">DXPS</shortName>
    </alternativeName>
</protein>
<accession>A0KNF9</accession>